<comment type="function">
    <text evidence="1">ATP-dependent carboxylate-amine ligase which exhibits weak glutamate--cysteine ligase activity.</text>
</comment>
<comment type="catalytic activity">
    <reaction evidence="1">
        <text>L-cysteine + L-glutamate + ATP = gamma-L-glutamyl-L-cysteine + ADP + phosphate + H(+)</text>
        <dbReference type="Rhea" id="RHEA:13285"/>
        <dbReference type="ChEBI" id="CHEBI:15378"/>
        <dbReference type="ChEBI" id="CHEBI:29985"/>
        <dbReference type="ChEBI" id="CHEBI:30616"/>
        <dbReference type="ChEBI" id="CHEBI:35235"/>
        <dbReference type="ChEBI" id="CHEBI:43474"/>
        <dbReference type="ChEBI" id="CHEBI:58173"/>
        <dbReference type="ChEBI" id="CHEBI:456216"/>
        <dbReference type="EC" id="6.3.2.2"/>
    </reaction>
</comment>
<comment type="similarity">
    <text evidence="1">Belongs to the glutamate--cysteine ligase type 2 family. YbdK subfamily.</text>
</comment>
<keyword id="KW-0067">ATP-binding</keyword>
<keyword id="KW-0436">Ligase</keyword>
<keyword id="KW-0547">Nucleotide-binding</keyword>
<reference key="1">
    <citation type="journal article" date="2007" name="Genome Res.">
        <title>Reductive evolution and niche adaptation inferred from the genome of Mycobacterium ulcerans, the causative agent of Buruli ulcer.</title>
        <authorList>
            <person name="Stinear T.P."/>
            <person name="Seemann T."/>
            <person name="Pidot S."/>
            <person name="Frigui W."/>
            <person name="Reysset G."/>
            <person name="Garnier T."/>
            <person name="Meurice G."/>
            <person name="Simon D."/>
            <person name="Bouchier C."/>
            <person name="Ma L."/>
            <person name="Tichit M."/>
            <person name="Porter J.L."/>
            <person name="Ryan J."/>
            <person name="Johnson P.D.R."/>
            <person name="Davies J.K."/>
            <person name="Jenkin G.A."/>
            <person name="Small P.L.C."/>
            <person name="Jones L.M."/>
            <person name="Tekaia F."/>
            <person name="Laval F."/>
            <person name="Daffe M."/>
            <person name="Parkhill J."/>
            <person name="Cole S.T."/>
        </authorList>
    </citation>
    <scope>NUCLEOTIDE SEQUENCE [LARGE SCALE GENOMIC DNA]</scope>
    <source>
        <strain>Agy99</strain>
    </source>
</reference>
<proteinExistence type="inferred from homology"/>
<evidence type="ECO:0000255" key="1">
    <source>
        <dbReference type="HAMAP-Rule" id="MF_01609"/>
    </source>
</evidence>
<evidence type="ECO:0000256" key="2">
    <source>
        <dbReference type="SAM" id="MobiDB-lite"/>
    </source>
</evidence>
<name>GCS2_MYCUA</name>
<dbReference type="EC" id="6.3.2.2" evidence="1"/>
<dbReference type="EMBL" id="CP000325">
    <property type="protein sequence ID" value="ABL03925.1"/>
    <property type="molecule type" value="Genomic_DNA"/>
</dbReference>
<dbReference type="SMR" id="A0PNK6"/>
<dbReference type="KEGG" id="mul:MUL_1380"/>
<dbReference type="eggNOG" id="COG2170">
    <property type="taxonomic scope" value="Bacteria"/>
</dbReference>
<dbReference type="HOGENOM" id="CLU_044848_1_0_11"/>
<dbReference type="Proteomes" id="UP000000765">
    <property type="component" value="Chromosome"/>
</dbReference>
<dbReference type="GO" id="GO:0005524">
    <property type="term" value="F:ATP binding"/>
    <property type="evidence" value="ECO:0007669"/>
    <property type="project" value="UniProtKB-KW"/>
</dbReference>
<dbReference type="GO" id="GO:0004357">
    <property type="term" value="F:glutamate-cysteine ligase activity"/>
    <property type="evidence" value="ECO:0007669"/>
    <property type="project" value="UniProtKB-EC"/>
</dbReference>
<dbReference type="GO" id="GO:0042398">
    <property type="term" value="P:modified amino acid biosynthetic process"/>
    <property type="evidence" value="ECO:0007669"/>
    <property type="project" value="InterPro"/>
</dbReference>
<dbReference type="Gene3D" id="3.30.590.20">
    <property type="match status" value="1"/>
</dbReference>
<dbReference type="HAMAP" id="MF_01609">
    <property type="entry name" value="Glu_cys_ligase_2"/>
    <property type="match status" value="1"/>
</dbReference>
<dbReference type="InterPro" id="IPR050141">
    <property type="entry name" value="GCL_type2/YbdK_subfam"/>
</dbReference>
<dbReference type="InterPro" id="IPR006336">
    <property type="entry name" value="GCS2"/>
</dbReference>
<dbReference type="InterPro" id="IPR014746">
    <property type="entry name" value="Gln_synth/guanido_kin_cat_dom"/>
</dbReference>
<dbReference type="InterPro" id="IPR011793">
    <property type="entry name" value="YbdK"/>
</dbReference>
<dbReference type="NCBIfam" id="TIGR02050">
    <property type="entry name" value="gshA_cyan_rel"/>
    <property type="match status" value="1"/>
</dbReference>
<dbReference type="NCBIfam" id="NF010042">
    <property type="entry name" value="PRK13517.1-2"/>
    <property type="match status" value="1"/>
</dbReference>
<dbReference type="NCBIfam" id="NF010043">
    <property type="entry name" value="PRK13517.1-3"/>
    <property type="match status" value="1"/>
</dbReference>
<dbReference type="NCBIfam" id="NF010044">
    <property type="entry name" value="PRK13517.1-4"/>
    <property type="match status" value="1"/>
</dbReference>
<dbReference type="PANTHER" id="PTHR36510">
    <property type="entry name" value="GLUTAMATE--CYSTEINE LIGASE 2-RELATED"/>
    <property type="match status" value="1"/>
</dbReference>
<dbReference type="PANTHER" id="PTHR36510:SF1">
    <property type="entry name" value="GLUTAMATE--CYSTEINE LIGASE 2-RELATED"/>
    <property type="match status" value="1"/>
</dbReference>
<dbReference type="Pfam" id="PF04107">
    <property type="entry name" value="GCS2"/>
    <property type="match status" value="1"/>
</dbReference>
<dbReference type="SUPFAM" id="SSF55931">
    <property type="entry name" value="Glutamine synthetase/guanido kinase"/>
    <property type="match status" value="1"/>
</dbReference>
<gene>
    <name type="ordered locus">MUL_1380</name>
</gene>
<protein>
    <recommendedName>
        <fullName evidence="1">Putative glutamate--cysteine ligase 2</fullName>
        <ecNumber evidence="1">6.3.2.2</ecNumber>
    </recommendedName>
    <alternativeName>
        <fullName evidence="1">Gamma-glutamylcysteine synthetase 2</fullName>
        <shortName evidence="1">GCS 2</shortName>
        <shortName evidence="1">Gamma-GCS 2</shortName>
    </alternativeName>
</protein>
<organism>
    <name type="scientific">Mycobacterium ulcerans (strain Agy99)</name>
    <dbReference type="NCBI Taxonomy" id="362242"/>
    <lineage>
        <taxon>Bacteria</taxon>
        <taxon>Bacillati</taxon>
        <taxon>Actinomycetota</taxon>
        <taxon>Actinomycetes</taxon>
        <taxon>Mycobacteriales</taxon>
        <taxon>Mycobacteriaceae</taxon>
        <taxon>Mycobacterium</taxon>
        <taxon>Mycobacterium ulcerans group</taxon>
    </lineage>
</organism>
<feature type="chain" id="PRO_0000291500" description="Putative glutamate--cysteine ligase 2">
    <location>
        <begin position="1"/>
        <end position="392"/>
    </location>
</feature>
<feature type="region of interest" description="Disordered" evidence="2">
    <location>
        <begin position="1"/>
        <end position="21"/>
    </location>
</feature>
<feature type="compositionally biased region" description="Low complexity" evidence="2">
    <location>
        <begin position="9"/>
        <end position="19"/>
    </location>
</feature>
<sequence length="392" mass="43577">MMPVSGWRAVSSAPASSSAGRTANRIDFARSPRPTVGVEWEFALVDAETRDLSNEATAVIAEIGENPRVHKELLRNTVEVVSGVCGSAGEAIEDLRTTLGPARRIVHARGMELFCEGTHPFAQWSTQKLTDAPRYAELIKRTQWWGRQMLIWGVHVHVGVSSANKVMPIISALLNYYPHLLALSASSPWWGGEDTGYASNRAMMFQQLPTAGLPFQFQTWSEFEGFVYDQKKTGIIDHINEIRWDIRPSPHLGTIELRICDGVSNLRELGALVALMHCLVVDLDRRLDAGETLPTMPPWHVQENKWRAARYGLDAVIILDAESNERLVTDDLDDVLTRLEPVARSLSCADELAAVAEIPRVGASYQRQRRVAEEHDGDLRAVVDALIAELDI</sequence>
<accession>A0PNK6</accession>